<keyword id="KW-0028">Amino-acid biosynthesis</keyword>
<keyword id="KW-0963">Cytoplasm</keyword>
<keyword id="KW-0368">Histidine biosynthesis</keyword>
<keyword id="KW-0456">Lyase</keyword>
<reference key="1">
    <citation type="submission" date="2008-01" db="EMBL/GenBank/DDBJ databases">
        <title>Complete sequence of Pseudomonas putida GB-1.</title>
        <authorList>
            <consortium name="US DOE Joint Genome Institute"/>
            <person name="Copeland A."/>
            <person name="Lucas S."/>
            <person name="Lapidus A."/>
            <person name="Barry K."/>
            <person name="Glavina del Rio T."/>
            <person name="Dalin E."/>
            <person name="Tice H."/>
            <person name="Pitluck S."/>
            <person name="Bruce D."/>
            <person name="Goodwin L."/>
            <person name="Chertkov O."/>
            <person name="Brettin T."/>
            <person name="Detter J.C."/>
            <person name="Han C."/>
            <person name="Kuske C.R."/>
            <person name="Schmutz J."/>
            <person name="Larimer F."/>
            <person name="Land M."/>
            <person name="Hauser L."/>
            <person name="Kyrpides N."/>
            <person name="Kim E."/>
            <person name="McCarthy J.K."/>
            <person name="Richardson P."/>
        </authorList>
    </citation>
    <scope>NUCLEOTIDE SEQUENCE [LARGE SCALE GENOMIC DNA]</scope>
    <source>
        <strain>GB-1</strain>
    </source>
</reference>
<name>HIS6_PSEPG</name>
<accession>B0KI45</accession>
<comment type="function">
    <text evidence="1">IGPS catalyzes the conversion of PRFAR and glutamine to IGP, AICAR and glutamate. The HisF subunit catalyzes the cyclization activity that produces IGP and AICAR from PRFAR using the ammonia provided by the HisH subunit.</text>
</comment>
<comment type="catalytic activity">
    <reaction evidence="1">
        <text>5-[(5-phospho-1-deoxy-D-ribulos-1-ylimino)methylamino]-1-(5-phospho-beta-D-ribosyl)imidazole-4-carboxamide + L-glutamine = D-erythro-1-(imidazol-4-yl)glycerol 3-phosphate + 5-amino-1-(5-phospho-beta-D-ribosyl)imidazole-4-carboxamide + L-glutamate + H(+)</text>
        <dbReference type="Rhea" id="RHEA:24793"/>
        <dbReference type="ChEBI" id="CHEBI:15378"/>
        <dbReference type="ChEBI" id="CHEBI:29985"/>
        <dbReference type="ChEBI" id="CHEBI:58278"/>
        <dbReference type="ChEBI" id="CHEBI:58359"/>
        <dbReference type="ChEBI" id="CHEBI:58475"/>
        <dbReference type="ChEBI" id="CHEBI:58525"/>
        <dbReference type="EC" id="4.3.2.10"/>
    </reaction>
</comment>
<comment type="pathway">
    <text evidence="1">Amino-acid biosynthesis; L-histidine biosynthesis; L-histidine from 5-phospho-alpha-D-ribose 1-diphosphate: step 5/9.</text>
</comment>
<comment type="subunit">
    <text evidence="1">Heterodimer of HisH and HisF.</text>
</comment>
<comment type="subcellular location">
    <subcellularLocation>
        <location evidence="1">Cytoplasm</location>
    </subcellularLocation>
</comment>
<comment type="similarity">
    <text evidence="1">Belongs to the HisA/HisF family.</text>
</comment>
<dbReference type="EC" id="4.3.2.10" evidence="1"/>
<dbReference type="EMBL" id="CP000926">
    <property type="protein sequence ID" value="ABY96231.1"/>
    <property type="molecule type" value="Genomic_DNA"/>
</dbReference>
<dbReference type="RefSeq" id="WP_008091498.1">
    <property type="nucleotide sequence ID" value="NC_010322.1"/>
</dbReference>
<dbReference type="SMR" id="B0KI45"/>
<dbReference type="GeneID" id="45521846"/>
<dbReference type="KEGG" id="ppg:PputGB1_0318"/>
<dbReference type="eggNOG" id="COG0107">
    <property type="taxonomic scope" value="Bacteria"/>
</dbReference>
<dbReference type="HOGENOM" id="CLU_048577_4_0_6"/>
<dbReference type="UniPathway" id="UPA00031">
    <property type="reaction ID" value="UER00010"/>
</dbReference>
<dbReference type="Proteomes" id="UP000002157">
    <property type="component" value="Chromosome"/>
</dbReference>
<dbReference type="GO" id="GO:0005737">
    <property type="term" value="C:cytoplasm"/>
    <property type="evidence" value="ECO:0007669"/>
    <property type="project" value="UniProtKB-SubCell"/>
</dbReference>
<dbReference type="GO" id="GO:0000107">
    <property type="term" value="F:imidazoleglycerol-phosphate synthase activity"/>
    <property type="evidence" value="ECO:0007669"/>
    <property type="project" value="UniProtKB-UniRule"/>
</dbReference>
<dbReference type="GO" id="GO:0016829">
    <property type="term" value="F:lyase activity"/>
    <property type="evidence" value="ECO:0007669"/>
    <property type="project" value="UniProtKB-KW"/>
</dbReference>
<dbReference type="GO" id="GO:0000105">
    <property type="term" value="P:L-histidine biosynthetic process"/>
    <property type="evidence" value="ECO:0007669"/>
    <property type="project" value="UniProtKB-UniRule"/>
</dbReference>
<dbReference type="CDD" id="cd04731">
    <property type="entry name" value="HisF"/>
    <property type="match status" value="1"/>
</dbReference>
<dbReference type="FunFam" id="3.20.20.70:FF:000006">
    <property type="entry name" value="Imidazole glycerol phosphate synthase subunit HisF"/>
    <property type="match status" value="1"/>
</dbReference>
<dbReference type="Gene3D" id="3.20.20.70">
    <property type="entry name" value="Aldolase class I"/>
    <property type="match status" value="1"/>
</dbReference>
<dbReference type="HAMAP" id="MF_01013">
    <property type="entry name" value="HisF"/>
    <property type="match status" value="1"/>
</dbReference>
<dbReference type="InterPro" id="IPR013785">
    <property type="entry name" value="Aldolase_TIM"/>
</dbReference>
<dbReference type="InterPro" id="IPR006062">
    <property type="entry name" value="His_biosynth"/>
</dbReference>
<dbReference type="InterPro" id="IPR004651">
    <property type="entry name" value="HisF"/>
</dbReference>
<dbReference type="InterPro" id="IPR050064">
    <property type="entry name" value="IGPS_HisA/HisF"/>
</dbReference>
<dbReference type="InterPro" id="IPR011060">
    <property type="entry name" value="RibuloseP-bd_barrel"/>
</dbReference>
<dbReference type="NCBIfam" id="TIGR00735">
    <property type="entry name" value="hisF"/>
    <property type="match status" value="1"/>
</dbReference>
<dbReference type="PANTHER" id="PTHR21235:SF2">
    <property type="entry name" value="IMIDAZOLE GLYCEROL PHOSPHATE SYNTHASE HISHF"/>
    <property type="match status" value="1"/>
</dbReference>
<dbReference type="PANTHER" id="PTHR21235">
    <property type="entry name" value="IMIDAZOLE GLYCEROL PHOSPHATE SYNTHASE SUBUNIT HISF/H IGP SYNTHASE SUBUNIT HISF/H"/>
    <property type="match status" value="1"/>
</dbReference>
<dbReference type="Pfam" id="PF00977">
    <property type="entry name" value="His_biosynth"/>
    <property type="match status" value="1"/>
</dbReference>
<dbReference type="SUPFAM" id="SSF51366">
    <property type="entry name" value="Ribulose-phoshate binding barrel"/>
    <property type="match status" value="1"/>
</dbReference>
<protein>
    <recommendedName>
        <fullName evidence="1">Imidazole glycerol phosphate synthase subunit HisF</fullName>
        <ecNumber evidence="1">4.3.2.10</ecNumber>
    </recommendedName>
    <alternativeName>
        <fullName evidence="1">IGP synthase cyclase subunit</fullName>
    </alternativeName>
    <alternativeName>
        <fullName evidence="1">IGP synthase subunit HisF</fullName>
    </alternativeName>
    <alternativeName>
        <fullName evidence="1">ImGP synthase subunit HisF</fullName>
        <shortName evidence="1">IGPS subunit HisF</shortName>
    </alternativeName>
</protein>
<sequence>MALAKRIIPCLDVDNGRVVKGVKFENIRDAGDPVEIARRYNEQGADEITFLDITASVDGRDTTLHTVERMASQVFIPLTVGGGVRTVQDIRNLLNAGADKVSINTAAVFNPEFVGEAADRFGSQCIVVAIDAKKVSGPGETPRWEIFTHGGRKPTGLDAVEWAKKMEGLGAGEILLTSMDQDGMKNGFDLGVTRAISDALGIPVIASGGVGNLQHLADGILEGHASAVLAASIFHFGEYTVPEAKAYMASRGIVVR</sequence>
<evidence type="ECO:0000255" key="1">
    <source>
        <dbReference type="HAMAP-Rule" id="MF_01013"/>
    </source>
</evidence>
<feature type="chain" id="PRO_1000084072" description="Imidazole glycerol phosphate synthase subunit HisF">
    <location>
        <begin position="1"/>
        <end position="256"/>
    </location>
</feature>
<feature type="active site" evidence="1">
    <location>
        <position position="12"/>
    </location>
</feature>
<feature type="active site" evidence="1">
    <location>
        <position position="131"/>
    </location>
</feature>
<proteinExistence type="inferred from homology"/>
<organism>
    <name type="scientific">Pseudomonas putida (strain GB-1)</name>
    <dbReference type="NCBI Taxonomy" id="76869"/>
    <lineage>
        <taxon>Bacteria</taxon>
        <taxon>Pseudomonadati</taxon>
        <taxon>Pseudomonadota</taxon>
        <taxon>Gammaproteobacteria</taxon>
        <taxon>Pseudomonadales</taxon>
        <taxon>Pseudomonadaceae</taxon>
        <taxon>Pseudomonas</taxon>
    </lineage>
</organism>
<gene>
    <name evidence="1" type="primary">hisF</name>
    <name type="ordered locus">PputGB1_0318</name>
</gene>